<gene>
    <name evidence="1" type="primary">pyrF</name>
    <name type="ordered locus">llmg_1107</name>
</gene>
<sequence>MQENRPVIALDFPEFSDVKDFLEKFDPSEKLYIKLGMELFYTAGPQVVYYVKSLGHSVFLDLKLHDIPNTVESSMRVLARLGVDMVNVHAAGGVEMMVAAKRGLEAGTPIGRQRPKLIAVTQLTSTSEEIMQNDQKIMTSLEESVINYAQKTAQAGLDGVVCSAHEVEKIKAATSKEFICLTPGIRPEGASKGDQKRVMTPKEARTIGSDYIVVGRPITQAKDPVSAYHAIKEEWNQ</sequence>
<keyword id="KW-0210">Decarboxylase</keyword>
<keyword id="KW-0456">Lyase</keyword>
<keyword id="KW-0665">Pyrimidine biosynthesis</keyword>
<reference key="1">
    <citation type="journal article" date="1996" name="J. Bacteriol.">
        <title>Sequence analysis and identification of the pyrKDbF operon from Lactococcus lactis including a novel gene, pyrK, involved in pyrimidine biosynthesis.</title>
        <authorList>
            <person name="Andersen P.S."/>
            <person name="Martinussen J."/>
            <person name="Hammer K."/>
        </authorList>
    </citation>
    <scope>NUCLEOTIDE SEQUENCE [GENOMIC DNA]</scope>
</reference>
<reference key="2">
    <citation type="journal article" date="2007" name="J. Bacteriol.">
        <title>The complete genome sequence of the lactic acid bacterial paradigm Lactococcus lactis subsp. cremoris MG1363.</title>
        <authorList>
            <person name="Wegmann U."/>
            <person name="O'Connell-Motherway M."/>
            <person name="Zomer A."/>
            <person name="Buist G."/>
            <person name="Shearman C."/>
            <person name="Canchaya C."/>
            <person name="Ventura M."/>
            <person name="Goesmann A."/>
            <person name="Gasson M.J."/>
            <person name="Kuipers O.P."/>
            <person name="van Sinderen D."/>
            <person name="Kok J."/>
        </authorList>
    </citation>
    <scope>NUCLEOTIDE SEQUENCE [LARGE SCALE GENOMIC DNA]</scope>
    <source>
        <strain>MG1363</strain>
    </source>
</reference>
<proteinExistence type="inferred from homology"/>
<organism>
    <name type="scientific">Lactococcus lactis subsp. cremoris (strain MG1363)</name>
    <dbReference type="NCBI Taxonomy" id="416870"/>
    <lineage>
        <taxon>Bacteria</taxon>
        <taxon>Bacillati</taxon>
        <taxon>Bacillota</taxon>
        <taxon>Bacilli</taxon>
        <taxon>Lactobacillales</taxon>
        <taxon>Streptococcaceae</taxon>
        <taxon>Lactococcus</taxon>
        <taxon>Lactococcus cremoris subsp. cremoris</taxon>
    </lineage>
</organism>
<comment type="function">
    <text evidence="1">Catalyzes the decarboxylation of orotidine 5'-monophosphate (OMP) to uridine 5'-monophosphate (UMP).</text>
</comment>
<comment type="catalytic activity">
    <reaction evidence="1">
        <text>orotidine 5'-phosphate + H(+) = UMP + CO2</text>
        <dbReference type="Rhea" id="RHEA:11596"/>
        <dbReference type="ChEBI" id="CHEBI:15378"/>
        <dbReference type="ChEBI" id="CHEBI:16526"/>
        <dbReference type="ChEBI" id="CHEBI:57538"/>
        <dbReference type="ChEBI" id="CHEBI:57865"/>
        <dbReference type="EC" id="4.1.1.23"/>
    </reaction>
</comment>
<comment type="pathway">
    <text evidence="1">Pyrimidine metabolism; UMP biosynthesis via de novo pathway; UMP from orotate: step 2/2.</text>
</comment>
<comment type="subunit">
    <text evidence="1">Homodimer.</text>
</comment>
<comment type="similarity">
    <text evidence="1">Belongs to the OMP decarboxylase family. Type 1 subfamily.</text>
</comment>
<protein>
    <recommendedName>
        <fullName evidence="1">Orotidine 5'-phosphate decarboxylase</fullName>
        <ecNumber evidence="1">4.1.1.23</ecNumber>
    </recommendedName>
    <alternativeName>
        <fullName evidence="1">OMP decarboxylase</fullName>
        <shortName evidence="1">OMPDCase</shortName>
        <shortName evidence="1">OMPdecase</shortName>
    </alternativeName>
</protein>
<name>PYRF_LACLM</name>
<accession>P50924</accession>
<accession>A2RK91</accession>
<evidence type="ECO:0000255" key="1">
    <source>
        <dbReference type="HAMAP-Rule" id="MF_01200"/>
    </source>
</evidence>
<feature type="chain" id="PRO_0000134550" description="Orotidine 5'-phosphate decarboxylase">
    <location>
        <begin position="1"/>
        <end position="237"/>
    </location>
</feature>
<feature type="active site" description="Proton donor" evidence="1">
    <location>
        <position position="63"/>
    </location>
</feature>
<feature type="binding site" evidence="1">
    <location>
        <position position="11"/>
    </location>
    <ligand>
        <name>substrate</name>
    </ligand>
</feature>
<feature type="binding site" evidence="1">
    <location>
        <position position="34"/>
    </location>
    <ligand>
        <name>substrate</name>
    </ligand>
</feature>
<feature type="binding site" evidence="1">
    <location>
        <begin position="61"/>
        <end position="70"/>
    </location>
    <ligand>
        <name>substrate</name>
    </ligand>
</feature>
<feature type="binding site" evidence="1">
    <location>
        <position position="124"/>
    </location>
    <ligand>
        <name>substrate</name>
    </ligand>
</feature>
<feature type="binding site" evidence="1">
    <location>
        <position position="186"/>
    </location>
    <ligand>
        <name>substrate</name>
    </ligand>
</feature>
<feature type="binding site" evidence="1">
    <location>
        <position position="195"/>
    </location>
    <ligand>
        <name>substrate</name>
    </ligand>
</feature>
<feature type="binding site" evidence="1">
    <location>
        <position position="215"/>
    </location>
    <ligand>
        <name>substrate</name>
    </ligand>
</feature>
<feature type="binding site" evidence="1">
    <location>
        <position position="216"/>
    </location>
    <ligand>
        <name>substrate</name>
    </ligand>
</feature>
<dbReference type="EC" id="4.1.1.23" evidence="1"/>
<dbReference type="EMBL" id="X74207">
    <property type="protein sequence ID" value="CAA52281.1"/>
    <property type="molecule type" value="Genomic_DNA"/>
</dbReference>
<dbReference type="EMBL" id="AM406671">
    <property type="protein sequence ID" value="CAL97701.1"/>
    <property type="molecule type" value="Genomic_DNA"/>
</dbReference>
<dbReference type="RefSeq" id="WP_011835015.1">
    <property type="nucleotide sequence ID" value="NC_009004.1"/>
</dbReference>
<dbReference type="SMR" id="P50924"/>
<dbReference type="STRING" id="416870.llmg_1107"/>
<dbReference type="KEGG" id="llm:llmg_1107"/>
<dbReference type="eggNOG" id="COG0284">
    <property type="taxonomic scope" value="Bacteria"/>
</dbReference>
<dbReference type="HOGENOM" id="CLU_067069_1_1_9"/>
<dbReference type="OrthoDB" id="9806203at2"/>
<dbReference type="PhylomeDB" id="P50924"/>
<dbReference type="UniPathway" id="UPA00070">
    <property type="reaction ID" value="UER00120"/>
</dbReference>
<dbReference type="Proteomes" id="UP000000364">
    <property type="component" value="Chromosome"/>
</dbReference>
<dbReference type="GO" id="GO:0005829">
    <property type="term" value="C:cytosol"/>
    <property type="evidence" value="ECO:0007669"/>
    <property type="project" value="TreeGrafter"/>
</dbReference>
<dbReference type="GO" id="GO:0004590">
    <property type="term" value="F:orotidine-5'-phosphate decarboxylase activity"/>
    <property type="evidence" value="ECO:0007669"/>
    <property type="project" value="UniProtKB-UniRule"/>
</dbReference>
<dbReference type="GO" id="GO:0006207">
    <property type="term" value="P:'de novo' pyrimidine nucleobase biosynthetic process"/>
    <property type="evidence" value="ECO:0007669"/>
    <property type="project" value="InterPro"/>
</dbReference>
<dbReference type="GO" id="GO:0044205">
    <property type="term" value="P:'de novo' UMP biosynthetic process"/>
    <property type="evidence" value="ECO:0007669"/>
    <property type="project" value="UniProtKB-UniRule"/>
</dbReference>
<dbReference type="CDD" id="cd04725">
    <property type="entry name" value="OMP_decarboxylase_like"/>
    <property type="match status" value="1"/>
</dbReference>
<dbReference type="FunFam" id="3.20.20.70:FF:000015">
    <property type="entry name" value="Orotidine 5'-phosphate decarboxylase"/>
    <property type="match status" value="1"/>
</dbReference>
<dbReference type="Gene3D" id="3.20.20.70">
    <property type="entry name" value="Aldolase class I"/>
    <property type="match status" value="1"/>
</dbReference>
<dbReference type="HAMAP" id="MF_01200_B">
    <property type="entry name" value="OMPdecase_type1_B"/>
    <property type="match status" value="1"/>
</dbReference>
<dbReference type="InterPro" id="IPR013785">
    <property type="entry name" value="Aldolase_TIM"/>
</dbReference>
<dbReference type="InterPro" id="IPR014732">
    <property type="entry name" value="OMPdecase"/>
</dbReference>
<dbReference type="InterPro" id="IPR018089">
    <property type="entry name" value="OMPdecase_AS"/>
</dbReference>
<dbReference type="InterPro" id="IPR047596">
    <property type="entry name" value="OMPdecase_bac"/>
</dbReference>
<dbReference type="InterPro" id="IPR001754">
    <property type="entry name" value="OMPdeCOase_dom"/>
</dbReference>
<dbReference type="InterPro" id="IPR011060">
    <property type="entry name" value="RibuloseP-bd_barrel"/>
</dbReference>
<dbReference type="NCBIfam" id="NF001273">
    <property type="entry name" value="PRK00230.1"/>
    <property type="match status" value="1"/>
</dbReference>
<dbReference type="NCBIfam" id="TIGR01740">
    <property type="entry name" value="pyrF"/>
    <property type="match status" value="1"/>
</dbReference>
<dbReference type="PANTHER" id="PTHR32119">
    <property type="entry name" value="OROTIDINE 5'-PHOSPHATE DECARBOXYLASE"/>
    <property type="match status" value="1"/>
</dbReference>
<dbReference type="PANTHER" id="PTHR32119:SF2">
    <property type="entry name" value="OROTIDINE 5'-PHOSPHATE DECARBOXYLASE"/>
    <property type="match status" value="1"/>
</dbReference>
<dbReference type="Pfam" id="PF00215">
    <property type="entry name" value="OMPdecase"/>
    <property type="match status" value="1"/>
</dbReference>
<dbReference type="SMART" id="SM00934">
    <property type="entry name" value="OMPdecase"/>
    <property type="match status" value="1"/>
</dbReference>
<dbReference type="SUPFAM" id="SSF51366">
    <property type="entry name" value="Ribulose-phoshate binding barrel"/>
    <property type="match status" value="1"/>
</dbReference>
<dbReference type="PROSITE" id="PS00156">
    <property type="entry name" value="OMPDECASE"/>
    <property type="match status" value="1"/>
</dbReference>